<reference key="1">
    <citation type="journal article" date="2004" name="J. Mol. Microbiol. Biotechnol.">
        <title>The complete genome sequence of Bacillus licheniformis DSM13, an organism with great industrial potential.</title>
        <authorList>
            <person name="Veith B."/>
            <person name="Herzberg C."/>
            <person name="Steckel S."/>
            <person name="Feesche J."/>
            <person name="Maurer K.H."/>
            <person name="Ehrenreich P."/>
            <person name="Baeumer S."/>
            <person name="Henne A."/>
            <person name="Liesegang H."/>
            <person name="Merkl R."/>
            <person name="Ehrenreich A."/>
            <person name="Gottschalk G."/>
        </authorList>
    </citation>
    <scope>NUCLEOTIDE SEQUENCE [LARGE SCALE GENOMIC DNA]</scope>
    <source>
        <strain>ATCC 14580 / DSM 13 / JCM 2505 / CCUG 7422 / NBRC 12200 / NCIMB 9375 / NCTC 10341 / NRRL NRS-1264 / Gibson 46</strain>
    </source>
</reference>
<reference key="2">
    <citation type="journal article" date="2004" name="Genome Biol.">
        <title>Complete genome sequence of the industrial bacterium Bacillus licheniformis and comparisons with closely related Bacillus species.</title>
        <authorList>
            <person name="Rey M.W."/>
            <person name="Ramaiya P."/>
            <person name="Nelson B.A."/>
            <person name="Brody-Karpin S.D."/>
            <person name="Zaretsky E.J."/>
            <person name="Tang M."/>
            <person name="Lopez de Leon A."/>
            <person name="Xiang H."/>
            <person name="Gusti V."/>
            <person name="Clausen I.G."/>
            <person name="Olsen P.B."/>
            <person name="Rasmussen M.D."/>
            <person name="Andersen J.T."/>
            <person name="Joergensen P.L."/>
            <person name="Larsen T.S."/>
            <person name="Sorokin A."/>
            <person name="Bolotin A."/>
            <person name="Lapidus A."/>
            <person name="Galleron N."/>
            <person name="Ehrlich S.D."/>
            <person name="Berka R.M."/>
        </authorList>
    </citation>
    <scope>NUCLEOTIDE SEQUENCE [LARGE SCALE GENOMIC DNA]</scope>
    <source>
        <strain>ATCC 14580 / DSM 13 / JCM 2505 / CCUG 7422 / NBRC 12200 / NCIMB 9375 / NCTC 10341 / NRRL NRS-1264 / Gibson 46</strain>
    </source>
</reference>
<dbReference type="EMBL" id="AE017333">
    <property type="protein sequence ID" value="AAU40853.1"/>
    <property type="molecule type" value="Genomic_DNA"/>
</dbReference>
<dbReference type="EMBL" id="CP000002">
    <property type="protein sequence ID" value="AAU23490.1"/>
    <property type="molecule type" value="Genomic_DNA"/>
</dbReference>
<dbReference type="RefSeq" id="WP_003182039.1">
    <property type="nucleotide sequence ID" value="NC_006270.3"/>
</dbReference>
<dbReference type="SMR" id="Q65JB1"/>
<dbReference type="STRING" id="279010.BL05171"/>
<dbReference type="KEGG" id="bld:BLi01959"/>
<dbReference type="KEGG" id="bli:BL05171"/>
<dbReference type="eggNOG" id="COG2076">
    <property type="taxonomic scope" value="Bacteria"/>
</dbReference>
<dbReference type="HOGENOM" id="CLU_133067_0_2_9"/>
<dbReference type="Proteomes" id="UP000000606">
    <property type="component" value="Chromosome"/>
</dbReference>
<dbReference type="GO" id="GO:0005886">
    <property type="term" value="C:plasma membrane"/>
    <property type="evidence" value="ECO:0007669"/>
    <property type="project" value="UniProtKB-SubCell"/>
</dbReference>
<dbReference type="GO" id="GO:0022857">
    <property type="term" value="F:transmembrane transporter activity"/>
    <property type="evidence" value="ECO:0007669"/>
    <property type="project" value="InterPro"/>
</dbReference>
<dbReference type="FunFam" id="1.10.3730.20:FF:000001">
    <property type="entry name" value="Quaternary ammonium compound resistance transporter SugE"/>
    <property type="match status" value="1"/>
</dbReference>
<dbReference type="Gene3D" id="1.10.3730.20">
    <property type="match status" value="1"/>
</dbReference>
<dbReference type="InterPro" id="IPR000390">
    <property type="entry name" value="Small_drug/metabolite_transptr"/>
</dbReference>
<dbReference type="InterPro" id="IPR045324">
    <property type="entry name" value="Small_multidrug_res"/>
</dbReference>
<dbReference type="PANTHER" id="PTHR30561:SF1">
    <property type="entry name" value="MULTIDRUG TRANSPORTER EMRE"/>
    <property type="match status" value="1"/>
</dbReference>
<dbReference type="PANTHER" id="PTHR30561">
    <property type="entry name" value="SMR FAMILY PROTON-DEPENDENT DRUG EFFLUX TRANSPORTER SUGE"/>
    <property type="match status" value="1"/>
</dbReference>
<dbReference type="Pfam" id="PF00893">
    <property type="entry name" value="Multi_Drug_Res"/>
    <property type="match status" value="1"/>
</dbReference>
<dbReference type="SUPFAM" id="SSF103481">
    <property type="entry name" value="Multidrug resistance efflux transporter EmrE"/>
    <property type="match status" value="1"/>
</dbReference>
<proteinExistence type="inferred from homology"/>
<gene>
    <name type="primary">ebrA</name>
    <name type="ordered locus">BLi01959</name>
    <name type="ordered locus">BL05171</name>
</gene>
<evidence type="ECO:0000250" key="1"/>
<evidence type="ECO:0000255" key="2"/>
<evidence type="ECO:0000305" key="3"/>
<feature type="chain" id="PRO_0000108090" description="Multidrug resistance protein EbrA">
    <location>
        <begin position="1"/>
        <end position="105"/>
    </location>
</feature>
<feature type="transmembrane region" description="Helical" evidence="2">
    <location>
        <begin position="2"/>
        <end position="22"/>
    </location>
</feature>
<feature type="transmembrane region" description="Helical" evidence="2">
    <location>
        <begin position="35"/>
        <end position="55"/>
    </location>
</feature>
<feature type="transmembrane region" description="Helical" evidence="2">
    <location>
        <begin position="60"/>
        <end position="80"/>
    </location>
</feature>
<feature type="transmembrane region" description="Helical" evidence="2">
    <location>
        <begin position="87"/>
        <end position="104"/>
    </location>
</feature>
<comment type="function">
    <text evidence="1">Part of a multidrug efflux pump. Confers resistance to cationic lipophilic dyes such as ethidium bromide, acriflavine, pyronine Y and safranin O. The efflux is probably coupled to an influx of protons (By similarity).</text>
</comment>
<comment type="subunit">
    <text evidence="1">The efflux pump is composed of EbrA and EbrB.</text>
</comment>
<comment type="subcellular location">
    <subcellularLocation>
        <location evidence="3">Cell membrane</location>
        <topology evidence="3">Multi-pass membrane protein</topology>
    </subcellularLocation>
</comment>
<comment type="similarity">
    <text evidence="3">Belongs to the drug/metabolite transporter (DMT) superfamily. Small multidrug resistance (SMR) (TC 2.A.7.1) family. EbrA/EbrB subfamily.</text>
</comment>
<sequence length="105" mass="11265">MIAGYIFLLIAILSEAAAAAMLKISDGFARWQPSVLVVIGYGLAFYMMSLTLQVIPLSLSYATWSGAGTVLTAIIGVLWFQEKLNRRNIAGIICLVSGVVLINLS</sequence>
<protein>
    <recommendedName>
        <fullName>Multidrug resistance protein EbrA</fullName>
    </recommendedName>
</protein>
<name>EBRA_BACLD</name>
<accession>Q65JB1</accession>
<keyword id="KW-1003">Cell membrane</keyword>
<keyword id="KW-0472">Membrane</keyword>
<keyword id="KW-1185">Reference proteome</keyword>
<keyword id="KW-0812">Transmembrane</keyword>
<keyword id="KW-1133">Transmembrane helix</keyword>
<keyword id="KW-0813">Transport</keyword>
<organism>
    <name type="scientific">Bacillus licheniformis (strain ATCC 14580 / DSM 13 / JCM 2505 / CCUG 7422 / NBRC 12200 / NCIMB 9375 / NCTC 10341 / NRRL NRS-1264 / Gibson 46)</name>
    <dbReference type="NCBI Taxonomy" id="279010"/>
    <lineage>
        <taxon>Bacteria</taxon>
        <taxon>Bacillati</taxon>
        <taxon>Bacillota</taxon>
        <taxon>Bacilli</taxon>
        <taxon>Bacillales</taxon>
        <taxon>Bacillaceae</taxon>
        <taxon>Bacillus</taxon>
    </lineage>
</organism>